<sequence>MNKDVSLGQPIVRYEDGKLFNTTDQYVTEFPLTIMVNGEEFATVICSPTNLEELVIGFLASEGAILKRDELKSVLIDDSKGFAHVGLNKDLGDRFQYSTKRMIASCCGKSREFYFQNDAAIAKTSMSKITLTPIQIINMMTRLQSASHIYQETGGLHNAAISDGLTFFVHRQDIGRHNALDKLYGFCIQRHITVRDKVLIFSGRISSEILIKAAKIGVGVILSKSAPTTLAVTLANDLNITAVGFIRNGGFNIYSHPERIIDSEQ</sequence>
<comment type="function">
    <text evidence="1">Required for formate dehydrogenase (FDH) activity. Acts as a sulfur carrier protein that transfers sulfur from IscS to the molybdenum cofactor prior to its insertion into FDH.</text>
</comment>
<comment type="subcellular location">
    <subcellularLocation>
        <location evidence="1">Cytoplasm</location>
    </subcellularLocation>
</comment>
<comment type="similarity">
    <text evidence="1">Belongs to the FdhD family.</text>
</comment>
<protein>
    <recommendedName>
        <fullName evidence="1">Sulfur carrier protein FdhD</fullName>
    </recommendedName>
</protein>
<dbReference type="EMBL" id="AJ938182">
    <property type="protein sequence ID" value="CAI81841.1"/>
    <property type="molecule type" value="Genomic_DNA"/>
</dbReference>
<dbReference type="RefSeq" id="WP_001030832.1">
    <property type="nucleotide sequence ID" value="NC_007622.1"/>
</dbReference>
<dbReference type="SMR" id="Q2YYR6"/>
<dbReference type="KEGG" id="sab:SAB2152"/>
<dbReference type="HOGENOM" id="CLU_056887_4_1_9"/>
<dbReference type="GO" id="GO:0005737">
    <property type="term" value="C:cytoplasm"/>
    <property type="evidence" value="ECO:0007669"/>
    <property type="project" value="UniProtKB-SubCell"/>
</dbReference>
<dbReference type="GO" id="GO:0097163">
    <property type="term" value="F:sulfur carrier activity"/>
    <property type="evidence" value="ECO:0007669"/>
    <property type="project" value="UniProtKB-UniRule"/>
</dbReference>
<dbReference type="GO" id="GO:0016783">
    <property type="term" value="F:sulfurtransferase activity"/>
    <property type="evidence" value="ECO:0007669"/>
    <property type="project" value="InterPro"/>
</dbReference>
<dbReference type="GO" id="GO:0006777">
    <property type="term" value="P:Mo-molybdopterin cofactor biosynthetic process"/>
    <property type="evidence" value="ECO:0007669"/>
    <property type="project" value="UniProtKB-UniRule"/>
</dbReference>
<dbReference type="Gene3D" id="3.10.20.10">
    <property type="match status" value="1"/>
</dbReference>
<dbReference type="Gene3D" id="3.40.140.10">
    <property type="entry name" value="Cytidine Deaminase, domain 2"/>
    <property type="match status" value="1"/>
</dbReference>
<dbReference type="HAMAP" id="MF_00187">
    <property type="entry name" value="FdhD"/>
    <property type="match status" value="1"/>
</dbReference>
<dbReference type="InterPro" id="IPR016193">
    <property type="entry name" value="Cytidine_deaminase-like"/>
</dbReference>
<dbReference type="InterPro" id="IPR003786">
    <property type="entry name" value="FdhD"/>
</dbReference>
<dbReference type="NCBIfam" id="TIGR00129">
    <property type="entry name" value="fdhD_narQ"/>
    <property type="match status" value="1"/>
</dbReference>
<dbReference type="PANTHER" id="PTHR30592">
    <property type="entry name" value="FORMATE DEHYDROGENASE"/>
    <property type="match status" value="1"/>
</dbReference>
<dbReference type="PANTHER" id="PTHR30592:SF1">
    <property type="entry name" value="SULFUR CARRIER PROTEIN FDHD"/>
    <property type="match status" value="1"/>
</dbReference>
<dbReference type="Pfam" id="PF02634">
    <property type="entry name" value="FdhD-NarQ"/>
    <property type="match status" value="1"/>
</dbReference>
<dbReference type="PIRSF" id="PIRSF015626">
    <property type="entry name" value="FdhD"/>
    <property type="match status" value="1"/>
</dbReference>
<dbReference type="SUPFAM" id="SSF53927">
    <property type="entry name" value="Cytidine deaminase-like"/>
    <property type="match status" value="1"/>
</dbReference>
<feature type="chain" id="PRO_1000020825" description="Sulfur carrier protein FdhD">
    <location>
        <begin position="1"/>
        <end position="265"/>
    </location>
</feature>
<feature type="active site" description="Cysteine persulfide intermediate" evidence="1">
    <location>
        <position position="107"/>
    </location>
</feature>
<gene>
    <name evidence="1" type="primary">fdhD</name>
    <name type="ordered locus">SAB2152</name>
</gene>
<reference key="1">
    <citation type="journal article" date="2007" name="PLoS ONE">
        <title>Molecular correlates of host specialization in Staphylococcus aureus.</title>
        <authorList>
            <person name="Herron-Olson L."/>
            <person name="Fitzgerald J.R."/>
            <person name="Musser J.M."/>
            <person name="Kapur V."/>
        </authorList>
    </citation>
    <scope>NUCLEOTIDE SEQUENCE [LARGE SCALE GENOMIC DNA]</scope>
    <source>
        <strain>bovine RF122 / ET3-1</strain>
    </source>
</reference>
<proteinExistence type="inferred from homology"/>
<name>FDHD_STAAB</name>
<keyword id="KW-0963">Cytoplasm</keyword>
<keyword id="KW-0501">Molybdenum cofactor biosynthesis</keyword>
<organism>
    <name type="scientific">Staphylococcus aureus (strain bovine RF122 / ET3-1)</name>
    <dbReference type="NCBI Taxonomy" id="273036"/>
    <lineage>
        <taxon>Bacteria</taxon>
        <taxon>Bacillati</taxon>
        <taxon>Bacillota</taxon>
        <taxon>Bacilli</taxon>
        <taxon>Bacillales</taxon>
        <taxon>Staphylococcaceae</taxon>
        <taxon>Staphylococcus</taxon>
    </lineage>
</organism>
<accession>Q2YYR6</accession>
<evidence type="ECO:0000255" key="1">
    <source>
        <dbReference type="HAMAP-Rule" id="MF_00187"/>
    </source>
</evidence>